<keyword id="KW-0030">Aminoacyl-tRNA synthetase</keyword>
<keyword id="KW-0067">ATP-binding</keyword>
<keyword id="KW-0963">Cytoplasm</keyword>
<keyword id="KW-0436">Ligase</keyword>
<keyword id="KW-0479">Metal-binding</keyword>
<keyword id="KW-0547">Nucleotide-binding</keyword>
<keyword id="KW-0648">Protein biosynthesis</keyword>
<keyword id="KW-1185">Reference proteome</keyword>
<keyword id="KW-0862">Zinc</keyword>
<organism>
    <name type="scientific">Bifidobacterium longum (strain NCC 2705)</name>
    <dbReference type="NCBI Taxonomy" id="206672"/>
    <lineage>
        <taxon>Bacteria</taxon>
        <taxon>Bacillati</taxon>
        <taxon>Actinomycetota</taxon>
        <taxon>Actinomycetes</taxon>
        <taxon>Bifidobacteriales</taxon>
        <taxon>Bifidobacteriaceae</taxon>
        <taxon>Bifidobacterium</taxon>
    </lineage>
</organism>
<accession>P59076</accession>
<proteinExistence type="inferred from homology"/>
<comment type="function">
    <text evidence="1">Is required not only for elongation of protein synthesis but also for the initiation of all mRNA translation through initiator tRNA(fMet) aminoacylation.</text>
</comment>
<comment type="catalytic activity">
    <reaction evidence="1">
        <text>tRNA(Met) + L-methionine + ATP = L-methionyl-tRNA(Met) + AMP + diphosphate</text>
        <dbReference type="Rhea" id="RHEA:13481"/>
        <dbReference type="Rhea" id="RHEA-COMP:9667"/>
        <dbReference type="Rhea" id="RHEA-COMP:9698"/>
        <dbReference type="ChEBI" id="CHEBI:30616"/>
        <dbReference type="ChEBI" id="CHEBI:33019"/>
        <dbReference type="ChEBI" id="CHEBI:57844"/>
        <dbReference type="ChEBI" id="CHEBI:78442"/>
        <dbReference type="ChEBI" id="CHEBI:78530"/>
        <dbReference type="ChEBI" id="CHEBI:456215"/>
        <dbReference type="EC" id="6.1.1.10"/>
    </reaction>
</comment>
<comment type="cofactor">
    <cofactor evidence="1">
        <name>Zn(2+)</name>
        <dbReference type="ChEBI" id="CHEBI:29105"/>
    </cofactor>
    <text evidence="1">Binds 1 zinc ion per subunit.</text>
</comment>
<comment type="subunit">
    <text evidence="1">Monomer.</text>
</comment>
<comment type="subcellular location">
    <subcellularLocation>
        <location evidence="1">Cytoplasm</location>
    </subcellularLocation>
</comment>
<comment type="similarity">
    <text evidence="1">Belongs to the class-I aminoacyl-tRNA synthetase family. MetG type 1 subfamily.</text>
</comment>
<evidence type="ECO:0000255" key="1">
    <source>
        <dbReference type="HAMAP-Rule" id="MF_00098"/>
    </source>
</evidence>
<feature type="chain" id="PRO_0000139105" description="Methionine--tRNA ligase">
    <location>
        <begin position="1"/>
        <end position="621"/>
    </location>
</feature>
<feature type="short sequence motif" description="'HIGH' region">
    <location>
        <begin position="11"/>
        <end position="21"/>
    </location>
</feature>
<feature type="short sequence motif" description="'KMSKS' region">
    <location>
        <begin position="347"/>
        <end position="351"/>
    </location>
</feature>
<feature type="binding site" evidence="1">
    <location>
        <position position="143"/>
    </location>
    <ligand>
        <name>Zn(2+)</name>
        <dbReference type="ChEBI" id="CHEBI:29105"/>
    </ligand>
</feature>
<feature type="binding site" evidence="1">
    <location>
        <position position="146"/>
    </location>
    <ligand>
        <name>Zn(2+)</name>
        <dbReference type="ChEBI" id="CHEBI:29105"/>
    </ligand>
</feature>
<feature type="binding site" evidence="1">
    <location>
        <position position="156"/>
    </location>
    <ligand>
        <name>Zn(2+)</name>
        <dbReference type="ChEBI" id="CHEBI:29105"/>
    </ligand>
</feature>
<feature type="binding site" evidence="1">
    <location>
        <position position="159"/>
    </location>
    <ligand>
        <name>Zn(2+)</name>
        <dbReference type="ChEBI" id="CHEBI:29105"/>
    </ligand>
</feature>
<feature type="binding site" evidence="1">
    <location>
        <position position="350"/>
    </location>
    <ligand>
        <name>ATP</name>
        <dbReference type="ChEBI" id="CHEBI:30616"/>
    </ligand>
</feature>
<reference key="1">
    <citation type="journal article" date="2002" name="Proc. Natl. Acad. Sci. U.S.A.">
        <title>The genome sequence of Bifidobacterium longum reflects its adaptation to the human gastrointestinal tract.</title>
        <authorList>
            <person name="Schell M.A."/>
            <person name="Karmirantzou M."/>
            <person name="Snel B."/>
            <person name="Vilanova D."/>
            <person name="Berger B."/>
            <person name="Pessi G."/>
            <person name="Zwahlen M.-C."/>
            <person name="Desiere F."/>
            <person name="Bork P."/>
            <person name="Delley M."/>
            <person name="Pridmore R.D."/>
            <person name="Arigoni F."/>
        </authorList>
    </citation>
    <scope>NUCLEOTIDE SEQUENCE [LARGE SCALE GENOMIC DNA]</scope>
    <source>
        <strain>NCC 2705</strain>
    </source>
</reference>
<gene>
    <name evidence="1" type="primary">metG</name>
    <name type="ordered locus">BL0170</name>
</gene>
<dbReference type="EC" id="6.1.1.10" evidence="1"/>
<dbReference type="EMBL" id="AE014295">
    <property type="protein sequence ID" value="AAN24025.1"/>
    <property type="molecule type" value="Genomic_DNA"/>
</dbReference>
<dbReference type="RefSeq" id="NP_695389.1">
    <property type="nucleotide sequence ID" value="NC_004307.2"/>
</dbReference>
<dbReference type="RefSeq" id="WP_011068654.1">
    <property type="nucleotide sequence ID" value="NC_004307.2"/>
</dbReference>
<dbReference type="SMR" id="P59076"/>
<dbReference type="STRING" id="206672.BL0170"/>
<dbReference type="EnsemblBacteria" id="AAN24025">
    <property type="protein sequence ID" value="AAN24025"/>
    <property type="gene ID" value="BL0170"/>
</dbReference>
<dbReference type="KEGG" id="blo:BL0170"/>
<dbReference type="PATRIC" id="fig|206672.9.peg.1470"/>
<dbReference type="HOGENOM" id="CLU_009710_1_2_11"/>
<dbReference type="OrthoDB" id="9810191at2"/>
<dbReference type="PhylomeDB" id="P59076"/>
<dbReference type="Proteomes" id="UP000000439">
    <property type="component" value="Chromosome"/>
</dbReference>
<dbReference type="GO" id="GO:0005829">
    <property type="term" value="C:cytosol"/>
    <property type="evidence" value="ECO:0007669"/>
    <property type="project" value="TreeGrafter"/>
</dbReference>
<dbReference type="GO" id="GO:0005524">
    <property type="term" value="F:ATP binding"/>
    <property type="evidence" value="ECO:0007669"/>
    <property type="project" value="UniProtKB-UniRule"/>
</dbReference>
<dbReference type="GO" id="GO:0046872">
    <property type="term" value="F:metal ion binding"/>
    <property type="evidence" value="ECO:0007669"/>
    <property type="project" value="UniProtKB-KW"/>
</dbReference>
<dbReference type="GO" id="GO:0004825">
    <property type="term" value="F:methionine-tRNA ligase activity"/>
    <property type="evidence" value="ECO:0007669"/>
    <property type="project" value="UniProtKB-UniRule"/>
</dbReference>
<dbReference type="GO" id="GO:0006431">
    <property type="term" value="P:methionyl-tRNA aminoacylation"/>
    <property type="evidence" value="ECO:0007669"/>
    <property type="project" value="UniProtKB-UniRule"/>
</dbReference>
<dbReference type="CDD" id="cd07957">
    <property type="entry name" value="Anticodon_Ia_Met"/>
    <property type="match status" value="1"/>
</dbReference>
<dbReference type="CDD" id="cd00814">
    <property type="entry name" value="MetRS_core"/>
    <property type="match status" value="1"/>
</dbReference>
<dbReference type="FunFam" id="2.20.28.20:FF:000001">
    <property type="entry name" value="Methionine--tRNA ligase"/>
    <property type="match status" value="1"/>
</dbReference>
<dbReference type="Gene3D" id="3.40.50.620">
    <property type="entry name" value="HUPs"/>
    <property type="match status" value="1"/>
</dbReference>
<dbReference type="Gene3D" id="1.10.730.10">
    <property type="entry name" value="Isoleucyl-tRNA Synthetase, Domain 1"/>
    <property type="match status" value="1"/>
</dbReference>
<dbReference type="Gene3D" id="2.20.28.20">
    <property type="entry name" value="Methionyl-tRNA synthetase, Zn-domain"/>
    <property type="match status" value="1"/>
</dbReference>
<dbReference type="HAMAP" id="MF_00098">
    <property type="entry name" value="Met_tRNA_synth_type1"/>
    <property type="match status" value="1"/>
</dbReference>
<dbReference type="InterPro" id="IPR041872">
    <property type="entry name" value="Anticodon_Met"/>
</dbReference>
<dbReference type="InterPro" id="IPR013155">
    <property type="entry name" value="M/V/L/I-tRNA-synth_anticd-bd"/>
</dbReference>
<dbReference type="InterPro" id="IPR023458">
    <property type="entry name" value="Met-tRNA_ligase_1"/>
</dbReference>
<dbReference type="InterPro" id="IPR014758">
    <property type="entry name" value="Met-tRNA_synth"/>
</dbReference>
<dbReference type="InterPro" id="IPR015413">
    <property type="entry name" value="Methionyl/Leucyl_tRNA_Synth"/>
</dbReference>
<dbReference type="InterPro" id="IPR033911">
    <property type="entry name" value="MetRS_core"/>
</dbReference>
<dbReference type="InterPro" id="IPR029038">
    <property type="entry name" value="MetRS_Zn"/>
</dbReference>
<dbReference type="InterPro" id="IPR014729">
    <property type="entry name" value="Rossmann-like_a/b/a_fold"/>
</dbReference>
<dbReference type="InterPro" id="IPR009080">
    <property type="entry name" value="tRNAsynth_Ia_anticodon-bd"/>
</dbReference>
<dbReference type="NCBIfam" id="TIGR00398">
    <property type="entry name" value="metG"/>
    <property type="match status" value="1"/>
</dbReference>
<dbReference type="PANTHER" id="PTHR45765">
    <property type="entry name" value="METHIONINE--TRNA LIGASE"/>
    <property type="match status" value="1"/>
</dbReference>
<dbReference type="PANTHER" id="PTHR45765:SF1">
    <property type="entry name" value="METHIONINE--TRNA LIGASE, CYTOPLASMIC"/>
    <property type="match status" value="1"/>
</dbReference>
<dbReference type="Pfam" id="PF08264">
    <property type="entry name" value="Anticodon_1"/>
    <property type="match status" value="1"/>
</dbReference>
<dbReference type="Pfam" id="PF09334">
    <property type="entry name" value="tRNA-synt_1g"/>
    <property type="match status" value="1"/>
</dbReference>
<dbReference type="PRINTS" id="PR01041">
    <property type="entry name" value="TRNASYNTHMET"/>
</dbReference>
<dbReference type="SUPFAM" id="SSF47323">
    <property type="entry name" value="Anticodon-binding domain of a subclass of class I aminoacyl-tRNA synthetases"/>
    <property type="match status" value="1"/>
</dbReference>
<dbReference type="SUPFAM" id="SSF57770">
    <property type="entry name" value="Methionyl-tRNA synthetase (MetRS), Zn-domain"/>
    <property type="match status" value="1"/>
</dbReference>
<dbReference type="SUPFAM" id="SSF52374">
    <property type="entry name" value="Nucleotidylyl transferase"/>
    <property type="match status" value="1"/>
</dbReference>
<protein>
    <recommendedName>
        <fullName evidence="1">Methionine--tRNA ligase</fullName>
        <ecNumber evidence="1">6.1.1.10</ecNumber>
    </recommendedName>
    <alternativeName>
        <fullName evidence="1">Methionyl-tRNA synthetase</fullName>
        <shortName evidence="1">MetRS</shortName>
    </alternativeName>
</protein>
<sequence length="621" mass="69091">MSHVLVNVAWPYANGPRHIGHVAGFGVPSDVYARYERMKGNDVLMVSGTDEHGTPILVEAEKEGLTAQELANRYNRVIAKDLCDLGLSYDLFTRTTTGNHEHVVQEMFKQCLENGYIYKGTQQVAISPSTGRTLPDRYIEGECPICHAEGARGDQCDACGNELDPDELINPVSKINGETPRFEQTEHYFLDLPALAEANKAWLETRKGWRTNVINFSLGLFKEVKPRAITRDIDWGIPVPVKGWIDNPNKKLYVWFDAVIGYLSASIEWARRQGDPEKWREWWNDPACPAYYFMGKDNITFHSQIWPSEMLAYNGKGSKGGETGPMGPLNLPEQVVASEFMTMEGKKFSSSRGIVIYVKDILARYPVDAVRYYISVAGPESSDSDFTWAEFVRHNNEELASSWGNLVNRVANLINKNFGEIPPLDEDSMTNEDRGLLEEASAAFDVVGSSIETHHQKHALSEAMRVVGDINKYISATEPWKIKDDQARLGTVLHVAAQAVSDANHLLAPFLPHSAQKVWEALGGTGTFSPLPELKEVEDLDKPGFTYPIITGDYELGVNVHPWKSEAIEVGAMVPKPAPIFAKIPTEAVEEELARFDEALAARRAAEAERLAAEKAKLAAE</sequence>
<name>SYM_BIFLO</name>